<accession>A7GJU5</accession>
<comment type="function">
    <text evidence="1">Involved in control of chromosome replication initiation. Inhibits the cooperative binding of DnaA to the oriC region, thus negatively regulating initiation of chromosome replication. Inhibits the ability of DnaA-ATP to form a helix on DNA; does not disassemble preformed DnaA-DNA helices. Decreases the residence time of DnaA on the chromosome at its binding sites (oriC, replication forks and promoter-binding sites). Tethers DnaA to the replication machinery via the DNA polymerase beta sliding clamp subunit (dnaN). Associates with oriC and other DnaA targets on the chromosome in a DnaA-dependent manner.</text>
</comment>
<comment type="cofactor">
    <cofactor evidence="1">
        <name>Zn(2+)</name>
        <dbReference type="ChEBI" id="CHEBI:29105"/>
    </cofactor>
    <text evidence="1">Binds 1 zinc ion per subunit.</text>
</comment>
<comment type="subunit">
    <text evidence="1">Homotetramer. Interacts with both DnaA and DnaN, acting as a bridge between these two proteins.</text>
</comment>
<comment type="subcellular location">
    <subcellularLocation>
        <location evidence="1">Cytoplasm</location>
        <location evidence="1">Nucleoid</location>
    </subcellularLocation>
    <text evidence="1">Localizes in tight foci, which correspond to the replisome at mid-cell throughout the cell cycle.</text>
</comment>
<comment type="similarity">
    <text evidence="1">Belongs to the YabA family.</text>
</comment>
<gene>
    <name evidence="1" type="primary">yabA</name>
    <name type="ordered locus">Bcer98_0028</name>
</gene>
<dbReference type="EMBL" id="CP000764">
    <property type="protein sequence ID" value="ABS20403.1"/>
    <property type="molecule type" value="Genomic_DNA"/>
</dbReference>
<dbReference type="RefSeq" id="WP_011983173.1">
    <property type="nucleotide sequence ID" value="NC_009674.1"/>
</dbReference>
<dbReference type="SMR" id="A7GJU5"/>
<dbReference type="STRING" id="315749.Bcer98_0028"/>
<dbReference type="GeneID" id="33895332"/>
<dbReference type="KEGG" id="bcy:Bcer98_0028"/>
<dbReference type="eggNOG" id="COG4467">
    <property type="taxonomic scope" value="Bacteria"/>
</dbReference>
<dbReference type="HOGENOM" id="CLU_157169_0_0_9"/>
<dbReference type="OrthoDB" id="2112130at2"/>
<dbReference type="Proteomes" id="UP000002300">
    <property type="component" value="Chromosome"/>
</dbReference>
<dbReference type="GO" id="GO:0009295">
    <property type="term" value="C:nucleoid"/>
    <property type="evidence" value="ECO:0007669"/>
    <property type="project" value="UniProtKB-SubCell"/>
</dbReference>
<dbReference type="GO" id="GO:0006260">
    <property type="term" value="P:DNA replication"/>
    <property type="evidence" value="ECO:0007669"/>
    <property type="project" value="UniProtKB-UniRule"/>
</dbReference>
<dbReference type="Gene3D" id="1.20.5.1160">
    <property type="entry name" value="Vasodilator-stimulated phosphoprotein"/>
    <property type="match status" value="1"/>
</dbReference>
<dbReference type="HAMAP" id="MF_01159">
    <property type="entry name" value="YabA"/>
    <property type="match status" value="1"/>
</dbReference>
<dbReference type="InterPro" id="IPR010377">
    <property type="entry name" value="YabA"/>
</dbReference>
<dbReference type="NCBIfam" id="NF009644">
    <property type="entry name" value="PRK13169.1-5"/>
    <property type="match status" value="1"/>
</dbReference>
<dbReference type="Pfam" id="PF06156">
    <property type="entry name" value="YabA"/>
    <property type="match status" value="1"/>
</dbReference>
<dbReference type="PIRSF" id="PIRSF021439">
    <property type="entry name" value="DUF972"/>
    <property type="match status" value="1"/>
</dbReference>
<sequence length="116" mass="13715">MEKKDIFGAVSSMEEQIGHLYKQLGELKQHLAELLEENQHIKMENENLRRRFEEAQTKEKQKTQKRKEVKPKTDIGEGYDNLARLYQEGFHICNLHYGSVRKEGDCLFCLSFLNKK</sequence>
<keyword id="KW-0963">Cytoplasm</keyword>
<keyword id="KW-0235">DNA replication</keyword>
<keyword id="KW-0236">DNA replication inhibitor</keyword>
<keyword id="KW-0479">Metal-binding</keyword>
<keyword id="KW-0862">Zinc</keyword>
<feature type="chain" id="PRO_1000085356" description="Replication initiation control protein YabA">
    <location>
        <begin position="1"/>
        <end position="116"/>
    </location>
</feature>
<feature type="region of interest" description="Disordered" evidence="2">
    <location>
        <begin position="54"/>
        <end position="73"/>
    </location>
</feature>
<feature type="binding site" evidence="1">
    <location>
        <position position="91"/>
    </location>
    <ligand>
        <name>Zn(2+)</name>
        <dbReference type="ChEBI" id="CHEBI:29105"/>
    </ligand>
</feature>
<feature type="binding site" evidence="1">
    <location>
        <position position="93"/>
    </location>
    <ligand>
        <name>Zn(2+)</name>
        <dbReference type="ChEBI" id="CHEBI:29105"/>
    </ligand>
</feature>
<feature type="binding site" evidence="1">
    <location>
        <position position="106"/>
    </location>
    <ligand>
        <name>Zn(2+)</name>
        <dbReference type="ChEBI" id="CHEBI:29105"/>
    </ligand>
</feature>
<feature type="binding site" evidence="1">
    <location>
        <position position="109"/>
    </location>
    <ligand>
        <name>Zn(2+)</name>
        <dbReference type="ChEBI" id="CHEBI:29105"/>
    </ligand>
</feature>
<name>YABA_BACCN</name>
<reference key="1">
    <citation type="journal article" date="2008" name="Chem. Biol. Interact.">
        <title>Extending the Bacillus cereus group genomics to putative food-borne pathogens of different toxicity.</title>
        <authorList>
            <person name="Lapidus A."/>
            <person name="Goltsman E."/>
            <person name="Auger S."/>
            <person name="Galleron N."/>
            <person name="Segurens B."/>
            <person name="Dossat C."/>
            <person name="Land M.L."/>
            <person name="Broussolle V."/>
            <person name="Brillard J."/>
            <person name="Guinebretiere M.-H."/>
            <person name="Sanchis V."/>
            <person name="Nguen-the C."/>
            <person name="Lereclus D."/>
            <person name="Richardson P."/>
            <person name="Wincker P."/>
            <person name="Weissenbach J."/>
            <person name="Ehrlich S.D."/>
            <person name="Sorokin A."/>
        </authorList>
    </citation>
    <scope>NUCLEOTIDE SEQUENCE [LARGE SCALE GENOMIC DNA]</scope>
    <source>
        <strain>DSM 22905 / CIP 110041 / 391-98 / NVH 391-98</strain>
    </source>
</reference>
<protein>
    <recommendedName>
        <fullName evidence="1">Replication initiation control protein YabA</fullName>
    </recommendedName>
</protein>
<proteinExistence type="inferred from homology"/>
<organism>
    <name type="scientific">Bacillus cytotoxicus (strain DSM 22905 / CIP 110041 / 391-98 / NVH 391-98)</name>
    <dbReference type="NCBI Taxonomy" id="315749"/>
    <lineage>
        <taxon>Bacteria</taxon>
        <taxon>Bacillati</taxon>
        <taxon>Bacillota</taxon>
        <taxon>Bacilli</taxon>
        <taxon>Bacillales</taxon>
        <taxon>Bacillaceae</taxon>
        <taxon>Bacillus</taxon>
        <taxon>Bacillus cereus group</taxon>
    </lineage>
</organism>
<evidence type="ECO:0000255" key="1">
    <source>
        <dbReference type="HAMAP-Rule" id="MF_01159"/>
    </source>
</evidence>
<evidence type="ECO:0000256" key="2">
    <source>
        <dbReference type="SAM" id="MobiDB-lite"/>
    </source>
</evidence>